<protein>
    <recommendedName>
        <fullName>Serine/threonine-protein kinase 25</fullName>
        <ecNumber>2.7.11.1</ecNumber>
    </recommendedName>
</protein>
<evidence type="ECO:0000250" key="1"/>
<evidence type="ECO:0000250" key="2">
    <source>
        <dbReference type="UniProtKB" id="O00506"/>
    </source>
</evidence>
<evidence type="ECO:0000250" key="3">
    <source>
        <dbReference type="UniProtKB" id="Q9Z2W1"/>
    </source>
</evidence>
<evidence type="ECO:0000255" key="4">
    <source>
        <dbReference type="PROSITE-ProRule" id="PRU00159"/>
    </source>
</evidence>
<evidence type="ECO:0000256" key="5">
    <source>
        <dbReference type="SAM" id="MobiDB-lite"/>
    </source>
</evidence>
<evidence type="ECO:0000305" key="6"/>
<dbReference type="EC" id="2.7.11.1"/>
<dbReference type="EMBL" id="AY346153">
    <property type="protein sequence ID" value="AAQ55285.1"/>
    <property type="status" value="ALT_FRAME"/>
    <property type="molecule type" value="mRNA"/>
</dbReference>
<dbReference type="EMBL" id="BC104597">
    <property type="protein sequence ID" value="AAI04598.1"/>
    <property type="molecule type" value="mRNA"/>
</dbReference>
<dbReference type="RefSeq" id="NP_001421692.1">
    <property type="nucleotide sequence ID" value="NM_001434763.1"/>
</dbReference>
<dbReference type="RefSeq" id="NP_899666.2">
    <property type="nucleotide sequence ID" value="NM_183407.3"/>
</dbReference>
<dbReference type="SMR" id="Q3SWY6"/>
<dbReference type="FunCoup" id="Q3SWY6">
    <property type="interactions" value="4679"/>
</dbReference>
<dbReference type="STRING" id="9913.ENSBTAP00000012764"/>
<dbReference type="PaxDb" id="9913-ENSBTAP00000040234"/>
<dbReference type="Ensembl" id="ENSBTAT00000042598.4">
    <property type="protein sequence ID" value="ENSBTAP00000040234.3"/>
    <property type="gene ID" value="ENSBTAG00000009676.7"/>
</dbReference>
<dbReference type="GeneID" id="373543"/>
<dbReference type="KEGG" id="bta:373543"/>
<dbReference type="CTD" id="10494"/>
<dbReference type="VEuPathDB" id="HostDB:ENSBTAG00000009676"/>
<dbReference type="VGNC" id="VGNC:35391">
    <property type="gene designation" value="STK25"/>
</dbReference>
<dbReference type="eggNOG" id="KOG0201">
    <property type="taxonomic scope" value="Eukaryota"/>
</dbReference>
<dbReference type="GeneTree" id="ENSGT00940000153476"/>
<dbReference type="InParanoid" id="Q3SWY6"/>
<dbReference type="OMA" id="ACEPIKR"/>
<dbReference type="OrthoDB" id="8693905at2759"/>
<dbReference type="Proteomes" id="UP000009136">
    <property type="component" value="Chromosome 3"/>
</dbReference>
<dbReference type="Bgee" id="ENSBTAG00000009676">
    <property type="expression patterns" value="Expressed in retina and 107 other cell types or tissues"/>
</dbReference>
<dbReference type="GO" id="GO:0005737">
    <property type="term" value="C:cytoplasm"/>
    <property type="evidence" value="ECO:0000318"/>
    <property type="project" value="GO_Central"/>
</dbReference>
<dbReference type="GO" id="GO:0090443">
    <property type="term" value="C:FAR/SIN/STRIPAK complex"/>
    <property type="evidence" value="ECO:0000250"/>
    <property type="project" value="UniProtKB"/>
</dbReference>
<dbReference type="GO" id="GO:0005794">
    <property type="term" value="C:Golgi apparatus"/>
    <property type="evidence" value="ECO:0000318"/>
    <property type="project" value="GO_Central"/>
</dbReference>
<dbReference type="GO" id="GO:0005524">
    <property type="term" value="F:ATP binding"/>
    <property type="evidence" value="ECO:0007669"/>
    <property type="project" value="UniProtKB-KW"/>
</dbReference>
<dbReference type="GO" id="GO:0046872">
    <property type="term" value="F:metal ion binding"/>
    <property type="evidence" value="ECO:0007669"/>
    <property type="project" value="UniProtKB-KW"/>
</dbReference>
<dbReference type="GO" id="GO:0106310">
    <property type="term" value="F:protein serine kinase activity"/>
    <property type="evidence" value="ECO:0007669"/>
    <property type="project" value="RHEA"/>
</dbReference>
<dbReference type="GO" id="GO:0004674">
    <property type="term" value="F:protein serine/threonine kinase activity"/>
    <property type="evidence" value="ECO:0000318"/>
    <property type="project" value="GO_Central"/>
</dbReference>
<dbReference type="GO" id="GO:0035556">
    <property type="term" value="P:intracellular signal transduction"/>
    <property type="evidence" value="ECO:0000318"/>
    <property type="project" value="GO_Central"/>
</dbReference>
<dbReference type="CDD" id="cd06642">
    <property type="entry name" value="STKc_STK25"/>
    <property type="match status" value="1"/>
</dbReference>
<dbReference type="FunFam" id="1.10.510.10:FF:000411">
    <property type="entry name" value="Probable Ste20-like kinase Don3"/>
    <property type="match status" value="1"/>
</dbReference>
<dbReference type="FunFam" id="3.30.200.20:FF:000092">
    <property type="entry name" value="Serine/threonine-protein kinase 24"/>
    <property type="match status" value="1"/>
</dbReference>
<dbReference type="FunFam" id="1.10.12.70:FF:000003">
    <property type="entry name" value="Serine/threonine-protein kinase 25"/>
    <property type="match status" value="1"/>
</dbReference>
<dbReference type="Gene3D" id="1.10.12.70">
    <property type="match status" value="1"/>
</dbReference>
<dbReference type="Gene3D" id="3.30.200.20">
    <property type="entry name" value="Phosphorylase Kinase, domain 1"/>
    <property type="match status" value="1"/>
</dbReference>
<dbReference type="Gene3D" id="1.10.510.10">
    <property type="entry name" value="Transferase(Phosphotransferase) domain 1"/>
    <property type="match status" value="1"/>
</dbReference>
<dbReference type="InterPro" id="IPR011009">
    <property type="entry name" value="Kinase-like_dom_sf"/>
</dbReference>
<dbReference type="InterPro" id="IPR046409">
    <property type="entry name" value="PDC10_dimerisation_sf"/>
</dbReference>
<dbReference type="InterPro" id="IPR048288">
    <property type="entry name" value="PDCD10_N"/>
</dbReference>
<dbReference type="InterPro" id="IPR000719">
    <property type="entry name" value="Prot_kinase_dom"/>
</dbReference>
<dbReference type="InterPro" id="IPR017441">
    <property type="entry name" value="Protein_kinase_ATP_BS"/>
</dbReference>
<dbReference type="InterPro" id="IPR050629">
    <property type="entry name" value="STE20/SPS1-PAK"/>
</dbReference>
<dbReference type="InterPro" id="IPR035060">
    <property type="entry name" value="STK_STK25"/>
</dbReference>
<dbReference type="PANTHER" id="PTHR48012:SF9">
    <property type="entry name" value="SERINE_THREONINE-PROTEIN KINASE 25"/>
    <property type="match status" value="1"/>
</dbReference>
<dbReference type="PANTHER" id="PTHR48012">
    <property type="entry name" value="STERILE20-LIKE KINASE, ISOFORM B-RELATED"/>
    <property type="match status" value="1"/>
</dbReference>
<dbReference type="Pfam" id="PF20929">
    <property type="entry name" value="PDCD10_N"/>
    <property type="match status" value="1"/>
</dbReference>
<dbReference type="Pfam" id="PF00069">
    <property type="entry name" value="Pkinase"/>
    <property type="match status" value="1"/>
</dbReference>
<dbReference type="SMART" id="SM00220">
    <property type="entry name" value="S_TKc"/>
    <property type="match status" value="1"/>
</dbReference>
<dbReference type="SUPFAM" id="SSF56112">
    <property type="entry name" value="Protein kinase-like (PK-like)"/>
    <property type="match status" value="1"/>
</dbReference>
<dbReference type="PROSITE" id="PS00107">
    <property type="entry name" value="PROTEIN_KINASE_ATP"/>
    <property type="match status" value="1"/>
</dbReference>
<dbReference type="PROSITE" id="PS50011">
    <property type="entry name" value="PROTEIN_KINASE_DOM"/>
    <property type="match status" value="1"/>
</dbReference>
<proteinExistence type="evidence at transcript level"/>
<name>STK25_BOVIN</name>
<reference key="1">
    <citation type="submission" date="2003-07" db="EMBL/GenBank/DDBJ databases">
        <authorList>
            <person name="Zhou G."/>
            <person name="Dang Y."/>
            <person name="Yu L."/>
        </authorList>
    </citation>
    <scope>NUCLEOTIDE SEQUENCE [MRNA]</scope>
</reference>
<reference key="2">
    <citation type="submission" date="2005-09" db="EMBL/GenBank/DDBJ databases">
        <authorList>
            <consortium name="NIH - Mammalian Gene Collection (MGC) project"/>
        </authorList>
    </citation>
    <scope>NUCLEOTIDE SEQUENCE [LARGE SCALE MRNA]</scope>
    <source>
        <strain>Hereford</strain>
        <tissue>Ascending colon</tissue>
    </source>
</reference>
<keyword id="KW-0067">ATP-binding</keyword>
<keyword id="KW-0963">Cytoplasm</keyword>
<keyword id="KW-0333">Golgi apparatus</keyword>
<keyword id="KW-0418">Kinase</keyword>
<keyword id="KW-0460">Magnesium</keyword>
<keyword id="KW-0479">Metal-binding</keyword>
<keyword id="KW-0547">Nucleotide-binding</keyword>
<keyword id="KW-0597">Phosphoprotein</keyword>
<keyword id="KW-1185">Reference proteome</keyword>
<keyword id="KW-0723">Serine/threonine-protein kinase</keyword>
<keyword id="KW-0808">Transferase</keyword>
<feature type="chain" id="PRO_0000288841" description="Serine/threonine-protein kinase 25">
    <location>
        <begin position="1"/>
        <end position="426"/>
    </location>
</feature>
<feature type="domain" description="Protein kinase" evidence="4">
    <location>
        <begin position="20"/>
        <end position="270"/>
    </location>
</feature>
<feature type="region of interest" description="Disordered" evidence="5">
    <location>
        <begin position="292"/>
        <end position="355"/>
    </location>
</feature>
<feature type="compositionally biased region" description="Acidic residues" evidence="5">
    <location>
        <begin position="299"/>
        <end position="314"/>
    </location>
</feature>
<feature type="active site" description="Proton acceptor" evidence="4">
    <location>
        <position position="140"/>
    </location>
</feature>
<feature type="binding site" evidence="4">
    <location>
        <begin position="26"/>
        <end position="34"/>
    </location>
    <ligand>
        <name>ATP</name>
        <dbReference type="ChEBI" id="CHEBI:30616"/>
    </ligand>
</feature>
<feature type="binding site" evidence="4">
    <location>
        <position position="49"/>
    </location>
    <ligand>
        <name>ATP</name>
        <dbReference type="ChEBI" id="CHEBI:30616"/>
    </ligand>
</feature>
<feature type="modified residue" description="Phosphothreonine; by autocatalysis" evidence="2">
    <location>
        <position position="174"/>
    </location>
</feature>
<feature type="modified residue" description="Phosphoserine" evidence="3">
    <location>
        <position position="278"/>
    </location>
</feature>
<feature type="sequence conflict" description="In Ref. 1; AAQ55285." evidence="6" ref="1">
    <original>K</original>
    <variation>N</variation>
    <location>
        <position position="344"/>
    </location>
</feature>
<sequence>MAHLRGFANQHSRVDPEELFTKLDRIGKGSFGEVYKGIDNRTKEVVAIKIIDLEEAEDEIEDIQQEITVLSQCDSPYITRYFGSYLKSTKLWIIMEYLGGGSALDLLKPGPLEETYIATILREILKGLDYLHSERKIHRDIKAANVLLSEQGDVKLADFGVAGQLTDTQIKRNTFVGTPFWMAPEVIKQSAYDFKADIWSLGITAIELAKGEPPNSDLHPMRVLFLIPKNSPPTLEGHHSKPFKEFVEACLNKDPRFRPTAKELLKHKFITRYTKKTSFLTELIDRYKRWRSEGHGEESSSEDSDIDGDPEDGEQGPIWTFPPTIRPSPHGKLHKGTALHGPQKSAEPVKRQPRSQCLSTLVRPVFGELKEKHKQSGGGVGALEELENAFSLAEESCPGISDKLMAHLVERVQRFSHSRNHLTSTR</sequence>
<comment type="function">
    <text evidence="2">Oxidant stress-activated serine/threonine kinase that may play a role in the response to environmental stress. Targets to the Golgi apparatus where it appears to regulate protein transport events, cell adhesion, and polarity complexes important for cell migration. Part of the striatin-interacting phosphatase and kinase (STRIPAK) complexes. STRIPAK complexes have critical roles in protein (de)phosphorylation and are regulators of multiple signaling pathways including Hippo, MAPK, nuclear receptor and cytoskeleton remodeling. Different types of STRIPAK complexes are involved in a variety of biological processes such as cell growth, differentiation, apoptosis, metabolism and immune regulation.</text>
</comment>
<comment type="catalytic activity">
    <reaction>
        <text>L-seryl-[protein] + ATP = O-phospho-L-seryl-[protein] + ADP + H(+)</text>
        <dbReference type="Rhea" id="RHEA:17989"/>
        <dbReference type="Rhea" id="RHEA-COMP:9863"/>
        <dbReference type="Rhea" id="RHEA-COMP:11604"/>
        <dbReference type="ChEBI" id="CHEBI:15378"/>
        <dbReference type="ChEBI" id="CHEBI:29999"/>
        <dbReference type="ChEBI" id="CHEBI:30616"/>
        <dbReference type="ChEBI" id="CHEBI:83421"/>
        <dbReference type="ChEBI" id="CHEBI:456216"/>
        <dbReference type="EC" id="2.7.11.1"/>
    </reaction>
</comment>
<comment type="catalytic activity">
    <reaction>
        <text>L-threonyl-[protein] + ATP = O-phospho-L-threonyl-[protein] + ADP + H(+)</text>
        <dbReference type="Rhea" id="RHEA:46608"/>
        <dbReference type="Rhea" id="RHEA-COMP:11060"/>
        <dbReference type="Rhea" id="RHEA-COMP:11605"/>
        <dbReference type="ChEBI" id="CHEBI:15378"/>
        <dbReference type="ChEBI" id="CHEBI:30013"/>
        <dbReference type="ChEBI" id="CHEBI:30616"/>
        <dbReference type="ChEBI" id="CHEBI:61977"/>
        <dbReference type="ChEBI" id="CHEBI:456216"/>
        <dbReference type="EC" id="2.7.11.1"/>
    </reaction>
</comment>
<comment type="cofactor">
    <cofactor evidence="1">
        <name>Mg(2+)</name>
        <dbReference type="ChEBI" id="CHEBI:18420"/>
    </cofactor>
</comment>
<comment type="activity regulation">
    <text evidence="1">Interaction with Golgi matrix protein GOLGA2 leads to autophosphorylation on Thr-174, possibly as a consequence of stabilization of dimer formation. The C-terminal non-catalytic region inhibits the kinase activity (By similarity).</text>
</comment>
<comment type="subunit">
    <text evidence="2">Homodimer. Interacts with CTTNBP2NL. Part of the core of STRIPAK complexes composed of PP2A catalytic and scaffolding subunits, the striatins (PP2A regulatory subunits), the striatin-associated proteins MOB4, STRIP1 and STRIP2, PDCD10 and members of the STE20 kinases, such as STK24 and STK26. Interacts with TAOK3 (via N-terminus); the interaction promotes STK25 abundance at the level of protein expression and/or stability.</text>
</comment>
<comment type="subcellular location">
    <subcellularLocation>
        <location evidence="1">Cytoplasm</location>
    </subcellularLocation>
    <subcellularLocation>
        <location evidence="1">Golgi apparatus</location>
    </subcellularLocation>
    <text evidence="1">Localizes to the Golgi apparatus.</text>
</comment>
<comment type="similarity">
    <text evidence="6">Belongs to the protein kinase superfamily. STE Ser/Thr protein kinase family. STE20 subfamily.</text>
</comment>
<comment type="sequence caution" evidence="6">
    <conflict type="frameshift">
        <sequence resource="EMBL-CDS" id="AAQ55285"/>
    </conflict>
</comment>
<organism>
    <name type="scientific">Bos taurus</name>
    <name type="common">Bovine</name>
    <dbReference type="NCBI Taxonomy" id="9913"/>
    <lineage>
        <taxon>Eukaryota</taxon>
        <taxon>Metazoa</taxon>
        <taxon>Chordata</taxon>
        <taxon>Craniata</taxon>
        <taxon>Vertebrata</taxon>
        <taxon>Euteleostomi</taxon>
        <taxon>Mammalia</taxon>
        <taxon>Eutheria</taxon>
        <taxon>Laurasiatheria</taxon>
        <taxon>Artiodactyla</taxon>
        <taxon>Ruminantia</taxon>
        <taxon>Pecora</taxon>
        <taxon>Bovidae</taxon>
        <taxon>Bovinae</taxon>
        <taxon>Bos</taxon>
    </lineage>
</organism>
<accession>Q3SWY6</accession>
<accession>Q6V9V8</accession>
<gene>
    <name type="primary">STK25</name>
</gene>